<dbReference type="EMBL" id="BA000018">
    <property type="protein sequence ID" value="BAB43319.1"/>
    <property type="molecule type" value="Genomic_DNA"/>
</dbReference>
<dbReference type="PIR" id="F90019">
    <property type="entry name" value="F90019"/>
</dbReference>
<dbReference type="RefSeq" id="WP_000868342.1">
    <property type="nucleotide sequence ID" value="NC_002745.2"/>
</dbReference>
<dbReference type="SMR" id="P66299"/>
<dbReference type="EnsemblBacteria" id="BAB43319">
    <property type="protein sequence ID" value="BAB43319"/>
    <property type="gene ID" value="BAB43319"/>
</dbReference>
<dbReference type="GeneID" id="98346539"/>
<dbReference type="KEGG" id="sau:SAS078"/>
<dbReference type="HOGENOM" id="CLU_135723_6_2_9"/>
<dbReference type="GO" id="GO:0005737">
    <property type="term" value="C:cytoplasm"/>
    <property type="evidence" value="ECO:0007669"/>
    <property type="project" value="UniProtKB-ARBA"/>
</dbReference>
<dbReference type="GO" id="GO:1990904">
    <property type="term" value="C:ribonucleoprotein complex"/>
    <property type="evidence" value="ECO:0007669"/>
    <property type="project" value="UniProtKB-KW"/>
</dbReference>
<dbReference type="GO" id="GO:0005840">
    <property type="term" value="C:ribosome"/>
    <property type="evidence" value="ECO:0007669"/>
    <property type="project" value="UniProtKB-KW"/>
</dbReference>
<dbReference type="GO" id="GO:0003735">
    <property type="term" value="F:structural constituent of ribosome"/>
    <property type="evidence" value="ECO:0007669"/>
    <property type="project" value="InterPro"/>
</dbReference>
<dbReference type="GO" id="GO:0006412">
    <property type="term" value="P:translation"/>
    <property type="evidence" value="ECO:0007669"/>
    <property type="project" value="UniProtKB-UniRule"/>
</dbReference>
<dbReference type="HAMAP" id="MF_00251">
    <property type="entry name" value="Ribosomal_bL36"/>
    <property type="match status" value="1"/>
</dbReference>
<dbReference type="InterPro" id="IPR000473">
    <property type="entry name" value="Ribosomal_bL36"/>
</dbReference>
<dbReference type="InterPro" id="IPR035977">
    <property type="entry name" value="Ribosomal_bL36_sp"/>
</dbReference>
<dbReference type="NCBIfam" id="TIGR01022">
    <property type="entry name" value="rpmJ_bact"/>
    <property type="match status" value="1"/>
</dbReference>
<dbReference type="PANTHER" id="PTHR42888">
    <property type="entry name" value="50S RIBOSOMAL PROTEIN L36, CHLOROPLASTIC"/>
    <property type="match status" value="1"/>
</dbReference>
<dbReference type="PANTHER" id="PTHR42888:SF1">
    <property type="entry name" value="LARGE RIBOSOMAL SUBUNIT PROTEIN BL36C"/>
    <property type="match status" value="1"/>
</dbReference>
<dbReference type="Pfam" id="PF00444">
    <property type="entry name" value="Ribosomal_L36"/>
    <property type="match status" value="1"/>
</dbReference>
<dbReference type="SUPFAM" id="SSF57840">
    <property type="entry name" value="Ribosomal protein L36"/>
    <property type="match status" value="1"/>
</dbReference>
<dbReference type="PROSITE" id="PS00828">
    <property type="entry name" value="RIBOSOMAL_L36"/>
    <property type="match status" value="1"/>
</dbReference>
<evidence type="ECO:0000255" key="1">
    <source>
        <dbReference type="HAMAP-Rule" id="MF_00251"/>
    </source>
</evidence>
<evidence type="ECO:0000305" key="2"/>
<reference key="1">
    <citation type="journal article" date="2001" name="Lancet">
        <title>Whole genome sequencing of meticillin-resistant Staphylococcus aureus.</title>
        <authorList>
            <person name="Kuroda M."/>
            <person name="Ohta T."/>
            <person name="Uchiyama I."/>
            <person name="Baba T."/>
            <person name="Yuzawa H."/>
            <person name="Kobayashi I."/>
            <person name="Cui L."/>
            <person name="Oguchi A."/>
            <person name="Aoki K."/>
            <person name="Nagai Y."/>
            <person name="Lian J.-Q."/>
            <person name="Ito T."/>
            <person name="Kanamori M."/>
            <person name="Matsumaru H."/>
            <person name="Maruyama A."/>
            <person name="Murakami H."/>
            <person name="Hosoyama A."/>
            <person name="Mizutani-Ui Y."/>
            <person name="Takahashi N.K."/>
            <person name="Sawano T."/>
            <person name="Inoue R."/>
            <person name="Kaito C."/>
            <person name="Sekimizu K."/>
            <person name="Hirakawa H."/>
            <person name="Kuhara S."/>
            <person name="Goto S."/>
            <person name="Yabuzaki J."/>
            <person name="Kanehisa M."/>
            <person name="Yamashita A."/>
            <person name="Oshima K."/>
            <person name="Furuya K."/>
            <person name="Yoshino C."/>
            <person name="Shiba T."/>
            <person name="Hattori M."/>
            <person name="Ogasawara N."/>
            <person name="Hayashi H."/>
            <person name="Hiramatsu K."/>
        </authorList>
    </citation>
    <scope>NUCLEOTIDE SEQUENCE [LARGE SCALE GENOMIC DNA]</scope>
    <source>
        <strain>N315</strain>
    </source>
</reference>
<gene>
    <name evidence="1" type="primary">rpmJ</name>
    <name type="ordered locus">SA2025.1</name>
    <name type="ORF">SAS078</name>
</gene>
<comment type="similarity">
    <text evidence="1">Belongs to the bacterial ribosomal protein bL36 family.</text>
</comment>
<protein>
    <recommendedName>
        <fullName evidence="1">Large ribosomal subunit protein bL36</fullName>
    </recommendedName>
    <alternativeName>
        <fullName evidence="2">50S ribosomal protein L36</fullName>
    </alternativeName>
</protein>
<organism>
    <name type="scientific">Staphylococcus aureus (strain N315)</name>
    <dbReference type="NCBI Taxonomy" id="158879"/>
    <lineage>
        <taxon>Bacteria</taxon>
        <taxon>Bacillati</taxon>
        <taxon>Bacillota</taxon>
        <taxon>Bacilli</taxon>
        <taxon>Bacillales</taxon>
        <taxon>Staphylococcaceae</taxon>
        <taxon>Staphylococcus</taxon>
    </lineage>
</organism>
<name>RL36_STAAN</name>
<keyword id="KW-0687">Ribonucleoprotein</keyword>
<keyword id="KW-0689">Ribosomal protein</keyword>
<feature type="chain" id="PRO_0000126259" description="Large ribosomal subunit protein bL36">
    <location>
        <begin position="1"/>
        <end position="37"/>
    </location>
</feature>
<accession>P66299</accession>
<accession>Q99S42</accession>
<proteinExistence type="inferred from homology"/>
<sequence>MKVRPSVKPICEKCKVIKRKGKVMVICENPKHKQRQG</sequence>